<reference key="1">
    <citation type="journal article" date="1997" name="Nature">
        <title>Molecular basis of symbiosis between Rhizobium and legumes.</title>
        <authorList>
            <person name="Freiberg C.A."/>
            <person name="Fellay R."/>
            <person name="Bairoch A."/>
            <person name="Broughton W.J."/>
            <person name="Rosenthal A."/>
            <person name="Perret X."/>
        </authorList>
    </citation>
    <scope>NUCLEOTIDE SEQUENCE [LARGE SCALE GENOMIC DNA]</scope>
    <source>
        <strain>NBRC 101917 / NGR234</strain>
    </source>
</reference>
<reference key="2">
    <citation type="journal article" date="2009" name="Appl. Environ. Microbiol.">
        <title>Rhizobium sp. strain NGR234 possesses a remarkable number of secretion systems.</title>
        <authorList>
            <person name="Schmeisser C."/>
            <person name="Liesegang H."/>
            <person name="Krysciak D."/>
            <person name="Bakkou N."/>
            <person name="Le Quere A."/>
            <person name="Wollherr A."/>
            <person name="Heinemeyer I."/>
            <person name="Morgenstern B."/>
            <person name="Pommerening-Roeser A."/>
            <person name="Flores M."/>
            <person name="Palacios R."/>
            <person name="Brenner S."/>
            <person name="Gottschalk G."/>
            <person name="Schmitz R.A."/>
            <person name="Broughton W.J."/>
            <person name="Perret X."/>
            <person name="Strittmatter A.W."/>
            <person name="Streit W.R."/>
        </authorList>
    </citation>
    <scope>NUCLEOTIDE SEQUENCE [LARGE SCALE GENOMIC DNA]</scope>
    <source>
        <strain>NBRC 101917 / NGR234</strain>
    </source>
</reference>
<accession>P55603</accession>
<name>Y4OR_SINFN</name>
<proteinExistence type="inferred from homology"/>
<dbReference type="EMBL" id="U00090">
    <property type="protein sequence ID" value="AAB91804.1"/>
    <property type="molecule type" value="Genomic_DNA"/>
</dbReference>
<dbReference type="RefSeq" id="NP_444007.1">
    <property type="nucleotide sequence ID" value="NC_000914.2"/>
</dbReference>
<dbReference type="RefSeq" id="WP_010875245.1">
    <property type="nucleotide sequence ID" value="NC_000914.2"/>
</dbReference>
<dbReference type="SMR" id="P55603"/>
<dbReference type="KEGG" id="rhi:NGR_a02180"/>
<dbReference type="PATRIC" id="fig|394.7.peg.229"/>
<dbReference type="eggNOG" id="COG0395">
    <property type="taxonomic scope" value="Bacteria"/>
</dbReference>
<dbReference type="HOGENOM" id="CLU_016047_1_2_5"/>
<dbReference type="OrthoDB" id="9815445at2"/>
<dbReference type="Proteomes" id="UP000001054">
    <property type="component" value="Plasmid pNGR234a"/>
</dbReference>
<dbReference type="GO" id="GO:0005886">
    <property type="term" value="C:plasma membrane"/>
    <property type="evidence" value="ECO:0007669"/>
    <property type="project" value="UniProtKB-SubCell"/>
</dbReference>
<dbReference type="GO" id="GO:0055085">
    <property type="term" value="P:transmembrane transport"/>
    <property type="evidence" value="ECO:0007669"/>
    <property type="project" value="InterPro"/>
</dbReference>
<dbReference type="CDD" id="cd06261">
    <property type="entry name" value="TM_PBP2"/>
    <property type="match status" value="1"/>
</dbReference>
<dbReference type="Gene3D" id="1.10.3720.10">
    <property type="entry name" value="MetI-like"/>
    <property type="match status" value="1"/>
</dbReference>
<dbReference type="InterPro" id="IPR050901">
    <property type="entry name" value="BP-dep_ABC_trans_perm"/>
</dbReference>
<dbReference type="InterPro" id="IPR000515">
    <property type="entry name" value="MetI-like"/>
</dbReference>
<dbReference type="InterPro" id="IPR035906">
    <property type="entry name" value="MetI-like_sf"/>
</dbReference>
<dbReference type="PANTHER" id="PTHR32243:SF18">
    <property type="entry name" value="INNER MEMBRANE ABC TRANSPORTER PERMEASE PROTEIN YCJP"/>
    <property type="match status" value="1"/>
</dbReference>
<dbReference type="PANTHER" id="PTHR32243">
    <property type="entry name" value="MALTOSE TRANSPORT SYSTEM PERMEASE-RELATED"/>
    <property type="match status" value="1"/>
</dbReference>
<dbReference type="Pfam" id="PF00528">
    <property type="entry name" value="BPD_transp_1"/>
    <property type="match status" value="1"/>
</dbReference>
<dbReference type="SUPFAM" id="SSF161098">
    <property type="entry name" value="MetI-like"/>
    <property type="match status" value="1"/>
</dbReference>
<dbReference type="PROSITE" id="PS50928">
    <property type="entry name" value="ABC_TM1"/>
    <property type="match status" value="1"/>
</dbReference>
<gene>
    <name type="ordered locus">NGR_a02180</name>
    <name type="ORF">y4oR</name>
</gene>
<protein>
    <recommendedName>
        <fullName>Probable ABC transporter permease protein y4oR</fullName>
    </recommendedName>
</protein>
<keyword id="KW-0997">Cell inner membrane</keyword>
<keyword id="KW-1003">Cell membrane</keyword>
<keyword id="KW-0472">Membrane</keyword>
<keyword id="KW-0614">Plasmid</keyword>
<keyword id="KW-1185">Reference proteome</keyword>
<keyword id="KW-0812">Transmembrane</keyword>
<keyword id="KW-1133">Transmembrane helix</keyword>
<keyword id="KW-0813">Transport</keyword>
<feature type="chain" id="PRO_0000060296" description="Probable ABC transporter permease protein y4oR">
    <location>
        <begin position="1"/>
        <end position="277"/>
    </location>
</feature>
<feature type="transmembrane region" description="Helical" evidence="1">
    <location>
        <begin position="15"/>
        <end position="35"/>
    </location>
</feature>
<feature type="transmembrane region" description="Helical" evidence="1">
    <location>
        <begin position="79"/>
        <end position="99"/>
    </location>
</feature>
<feature type="transmembrane region" description="Helical" evidence="1">
    <location>
        <begin position="109"/>
        <end position="129"/>
    </location>
</feature>
<feature type="transmembrane region" description="Helical" evidence="1">
    <location>
        <begin position="140"/>
        <end position="160"/>
    </location>
</feature>
<feature type="transmembrane region" description="Helical" evidence="1">
    <location>
        <begin position="189"/>
        <end position="209"/>
    </location>
</feature>
<feature type="transmembrane region" description="Helical" evidence="1">
    <location>
        <begin position="213"/>
        <end position="233"/>
    </location>
</feature>
<feature type="transmembrane region" description="Helical" evidence="1">
    <location>
        <begin position="242"/>
        <end position="262"/>
    </location>
</feature>
<feature type="domain" description="ABC transmembrane type-1" evidence="1">
    <location>
        <begin position="74"/>
        <end position="263"/>
    </location>
</feature>
<comment type="function">
    <text>Probably part of the binding-protein-dependent transport system y4oPQRS. This system probably transports a sugar-like molecule. Probably responsible for the translocation of the substrate across the membrane.</text>
</comment>
<comment type="subcellular location">
    <subcellularLocation>
        <location evidence="2">Cell inner membrane</location>
        <topology evidence="1">Multi-pass membrane protein</topology>
    </subcellularLocation>
</comment>
<comment type="similarity">
    <text evidence="2">Belongs to the binding-protein-dependent transport system permease family. MalFG subfamily.</text>
</comment>
<organism>
    <name type="scientific">Sinorhizobium fredii (strain NBRC 101917 / NGR234)</name>
    <dbReference type="NCBI Taxonomy" id="394"/>
    <lineage>
        <taxon>Bacteria</taxon>
        <taxon>Pseudomonadati</taxon>
        <taxon>Pseudomonadota</taxon>
        <taxon>Alphaproteobacteria</taxon>
        <taxon>Hyphomicrobiales</taxon>
        <taxon>Rhizobiaceae</taxon>
        <taxon>Sinorhizobium/Ensifer group</taxon>
        <taxon>Sinorhizobium</taxon>
    </lineage>
</organism>
<sequence>MAISSNTSRTTRKLLWTLFWCVLAFVYLFPYTWMVLTGFRHGVDTISMPPRFIFEPTLAGFKHLFEVTGFQKYIINSAVVTIVSVVLVIAVSAPAAYALAHVTKRGGTLLVAILVARIIPGIAIGVPVYLLATRLHQLDTYQALIIINVAVNIPFAIWLMRSFFMEVHPTLREAAISDGCSEWQVFTKIMMPLVLGGMLATAVFVFIAVWNEFLFALILTTSVSPTAPLAMLGFRTQYGVQWDAVGAAAFLVSTPVIAFAFIMQRYLVQGLTMGSVK</sequence>
<geneLocation type="plasmid">
    <name>sym pNGR234a</name>
</geneLocation>
<evidence type="ECO:0000255" key="1">
    <source>
        <dbReference type="PROSITE-ProRule" id="PRU00441"/>
    </source>
</evidence>
<evidence type="ECO:0000305" key="2"/>